<evidence type="ECO:0000255" key="1">
    <source>
        <dbReference type="PROSITE-ProRule" id="PRU00074"/>
    </source>
</evidence>
<evidence type="ECO:0000255" key="2">
    <source>
        <dbReference type="PROSITE-ProRule" id="PRU00095"/>
    </source>
</evidence>
<evidence type="ECO:0000255" key="3">
    <source>
        <dbReference type="PROSITE-ProRule" id="PRU00140"/>
    </source>
</evidence>
<evidence type="ECO:0000255" key="4">
    <source>
        <dbReference type="PROSITE-ProRule" id="PRU00141"/>
    </source>
</evidence>
<protein>
    <recommendedName>
        <fullName>Uncharacterized protein y4lL</fullName>
    </recommendedName>
</protein>
<proteinExistence type="predicted"/>
<geneLocation type="plasmid">
    <name>sym pNGR234a</name>
</geneLocation>
<reference key="1">
    <citation type="journal article" date="1997" name="Nature">
        <title>Molecular basis of symbiosis between Rhizobium and legumes.</title>
        <authorList>
            <person name="Freiberg C.A."/>
            <person name="Fellay R."/>
            <person name="Bairoch A."/>
            <person name="Broughton W.J."/>
            <person name="Rosenthal A."/>
            <person name="Perret X."/>
        </authorList>
    </citation>
    <scope>NUCLEOTIDE SEQUENCE [LARGE SCALE GENOMIC DNA]</scope>
    <source>
        <strain>NBRC 101917 / NGR234</strain>
    </source>
</reference>
<reference key="2">
    <citation type="journal article" date="2009" name="Appl. Environ. Microbiol.">
        <title>Rhizobium sp. strain NGR234 possesses a remarkable number of secretion systems.</title>
        <authorList>
            <person name="Schmeisser C."/>
            <person name="Liesegang H."/>
            <person name="Krysciak D."/>
            <person name="Bakkou N."/>
            <person name="Le Quere A."/>
            <person name="Wollherr A."/>
            <person name="Heinemeyer I."/>
            <person name="Morgenstern B."/>
            <person name="Pommerening-Roeser A."/>
            <person name="Flores M."/>
            <person name="Palacios R."/>
            <person name="Brenner S."/>
            <person name="Gottschalk G."/>
            <person name="Schmitz R.A."/>
            <person name="Broughton W.J."/>
            <person name="Perret X."/>
            <person name="Strittmatter A.W."/>
            <person name="Streit W.R."/>
        </authorList>
    </citation>
    <scope>NUCLEOTIDE SEQUENCE [LARGE SCALE GENOMIC DNA]</scope>
    <source>
        <strain>NBRC 101917 / NGR234</strain>
    </source>
</reference>
<name>Y4LL_SINFN</name>
<sequence>MQRTSFENQLTFDADFEAILNAIPQPIIVKDEHFRFLFLNDAACMLVGRARCDLIGHTDYDILPTAEADRYRDMDIGVLSTGEEVSVEEPIAVPGGEVRRLVTRKSRAILTRGSSSEKVIVAIALDVTECRTAEAALQASVEHHRSLTELHPQVPWTADPSGEVLEIGPRWEKTGYAPKEALGAGWAKAMHPDDLGEVQREWAKSLATGEPLDVEFRLAAAEGGYSWYRSRAATRRAEDGSILRWYGTVEDIDDRRKMFEALKESEARFRAIADDAPVMIWVTGENGADDYHSRLWLETTGQTAEQAAGKGWLNAVHPDDRNAVERVFYQAFDLREPVRMEYRLKRAGGGSAWVIDIGQPRFASDGTFLGFVGIALDITERRNAEQERLLAQKQIHHMARHDALTGLPNRQFLREEFERLSDHIAPSTRLAILCLDLDGFKAINDAYGRATGDLLLRHVTERLRNFLKQSDILCRLSGDEFVVLRVGINSNAEARLLAQQLIDVIEAPYELAGTHVDLQVVVGLAAASKSDQSLDELIKTADIALERAKTGGGGTIVQYEPKMDADLRARQRMKVSLRHALAKGELEVRYQPLANLRTGQITTFEALARWPHPERGQVSPAEFIAVAEETGLIGPLGEWILRQACTEAVKWPPYVSVAVNLSPLQFRNQRLASTVRNSLEDTGLDASRLQLEITESVLLEECDSNLQTLKEIRQLGVIVAIDDFGTGYSSLSYLRTFPFDKIKVDRSFIADLPKSKESLAIVRAVAAIGRSLGIITTVEGVERQDQLDTIKAEGFDEAQGYLFGGPLPASQAMALLKSRSEISAAER</sequence>
<feature type="chain" id="PRO_0000200906" description="Uncharacterized protein y4lL">
    <location>
        <begin position="1"/>
        <end position="827"/>
    </location>
</feature>
<feature type="domain" description="PAS 1" evidence="3">
    <location>
        <begin position="12"/>
        <end position="82"/>
    </location>
</feature>
<feature type="domain" description="PAC 1" evidence="4">
    <location>
        <begin position="212"/>
        <end position="264"/>
    </location>
</feature>
<feature type="domain" description="PAS 2" evidence="3">
    <location>
        <begin position="265"/>
        <end position="335"/>
    </location>
</feature>
<feature type="domain" description="PAC 2" evidence="4">
    <location>
        <begin position="338"/>
        <end position="390"/>
    </location>
</feature>
<feature type="domain" description="GGDEF" evidence="2">
    <location>
        <begin position="428"/>
        <end position="561"/>
    </location>
</feature>
<feature type="domain" description="EAL" evidence="1">
    <location>
        <begin position="570"/>
        <end position="820"/>
    </location>
</feature>
<dbReference type="EMBL" id="U00090">
    <property type="protein sequence ID" value="AAB91764.1"/>
    <property type="molecule type" value="Genomic_DNA"/>
</dbReference>
<dbReference type="RefSeq" id="NP_443962.1">
    <property type="nucleotide sequence ID" value="NC_000914.2"/>
</dbReference>
<dbReference type="RefSeq" id="WP_010875288.1">
    <property type="nucleotide sequence ID" value="NC_000914.2"/>
</dbReference>
<dbReference type="SMR" id="P55552"/>
<dbReference type="KEGG" id="rhi:NGR_a02630"/>
<dbReference type="PATRIC" id="fig|394.7.peg.278"/>
<dbReference type="eggNOG" id="COG5001">
    <property type="taxonomic scope" value="Bacteria"/>
</dbReference>
<dbReference type="HOGENOM" id="CLU_000445_70_20_5"/>
<dbReference type="OrthoDB" id="9814202at2"/>
<dbReference type="Proteomes" id="UP000001054">
    <property type="component" value="Plasmid pNGR234a"/>
</dbReference>
<dbReference type="CDD" id="cd01948">
    <property type="entry name" value="EAL"/>
    <property type="match status" value="1"/>
</dbReference>
<dbReference type="CDD" id="cd01949">
    <property type="entry name" value="GGDEF"/>
    <property type="match status" value="1"/>
</dbReference>
<dbReference type="CDD" id="cd00130">
    <property type="entry name" value="PAS"/>
    <property type="match status" value="3"/>
</dbReference>
<dbReference type="FunFam" id="3.30.450.20:FF:000099">
    <property type="entry name" value="Sensory box sensor histidine kinase"/>
    <property type="match status" value="2"/>
</dbReference>
<dbReference type="Gene3D" id="3.30.70.270">
    <property type="match status" value="1"/>
</dbReference>
<dbReference type="Gene3D" id="3.20.20.450">
    <property type="entry name" value="EAL domain"/>
    <property type="match status" value="1"/>
</dbReference>
<dbReference type="Gene3D" id="3.30.450.20">
    <property type="entry name" value="PAS domain"/>
    <property type="match status" value="3"/>
</dbReference>
<dbReference type="InterPro" id="IPR052155">
    <property type="entry name" value="Biofilm_reg_signaling"/>
</dbReference>
<dbReference type="InterPro" id="IPR001633">
    <property type="entry name" value="EAL_dom"/>
</dbReference>
<dbReference type="InterPro" id="IPR035919">
    <property type="entry name" value="EAL_sf"/>
</dbReference>
<dbReference type="InterPro" id="IPR000160">
    <property type="entry name" value="GGDEF_dom"/>
</dbReference>
<dbReference type="InterPro" id="IPR029787">
    <property type="entry name" value="Nucleotide_cyclase"/>
</dbReference>
<dbReference type="InterPro" id="IPR001610">
    <property type="entry name" value="PAC"/>
</dbReference>
<dbReference type="InterPro" id="IPR000014">
    <property type="entry name" value="PAS"/>
</dbReference>
<dbReference type="InterPro" id="IPR000700">
    <property type="entry name" value="PAS-assoc_C"/>
</dbReference>
<dbReference type="InterPro" id="IPR035965">
    <property type="entry name" value="PAS-like_dom_sf"/>
</dbReference>
<dbReference type="InterPro" id="IPR013656">
    <property type="entry name" value="PAS_4"/>
</dbReference>
<dbReference type="InterPro" id="IPR013655">
    <property type="entry name" value="PAS_fold_3"/>
</dbReference>
<dbReference type="InterPro" id="IPR043128">
    <property type="entry name" value="Rev_trsase/Diguanyl_cyclase"/>
</dbReference>
<dbReference type="NCBIfam" id="TIGR00254">
    <property type="entry name" value="GGDEF"/>
    <property type="match status" value="1"/>
</dbReference>
<dbReference type="NCBIfam" id="TIGR00229">
    <property type="entry name" value="sensory_box"/>
    <property type="match status" value="3"/>
</dbReference>
<dbReference type="PANTHER" id="PTHR44757:SF2">
    <property type="entry name" value="BIOFILM ARCHITECTURE MAINTENANCE PROTEIN MBAA"/>
    <property type="match status" value="1"/>
</dbReference>
<dbReference type="PANTHER" id="PTHR44757">
    <property type="entry name" value="DIGUANYLATE CYCLASE DGCP"/>
    <property type="match status" value="1"/>
</dbReference>
<dbReference type="Pfam" id="PF00563">
    <property type="entry name" value="EAL"/>
    <property type="match status" value="1"/>
</dbReference>
<dbReference type="Pfam" id="PF00990">
    <property type="entry name" value="GGDEF"/>
    <property type="match status" value="1"/>
</dbReference>
<dbReference type="Pfam" id="PF08447">
    <property type="entry name" value="PAS_3"/>
    <property type="match status" value="2"/>
</dbReference>
<dbReference type="Pfam" id="PF08448">
    <property type="entry name" value="PAS_4"/>
    <property type="match status" value="1"/>
</dbReference>
<dbReference type="SMART" id="SM00052">
    <property type="entry name" value="EAL"/>
    <property type="match status" value="1"/>
</dbReference>
<dbReference type="SMART" id="SM00267">
    <property type="entry name" value="GGDEF"/>
    <property type="match status" value="1"/>
</dbReference>
<dbReference type="SMART" id="SM00086">
    <property type="entry name" value="PAC"/>
    <property type="match status" value="2"/>
</dbReference>
<dbReference type="SMART" id="SM00091">
    <property type="entry name" value="PAS"/>
    <property type="match status" value="3"/>
</dbReference>
<dbReference type="SUPFAM" id="SSF141868">
    <property type="entry name" value="EAL domain-like"/>
    <property type="match status" value="1"/>
</dbReference>
<dbReference type="SUPFAM" id="SSF55073">
    <property type="entry name" value="Nucleotide cyclase"/>
    <property type="match status" value="1"/>
</dbReference>
<dbReference type="SUPFAM" id="SSF55785">
    <property type="entry name" value="PYP-like sensor domain (PAS domain)"/>
    <property type="match status" value="3"/>
</dbReference>
<dbReference type="PROSITE" id="PS50883">
    <property type="entry name" value="EAL"/>
    <property type="match status" value="1"/>
</dbReference>
<dbReference type="PROSITE" id="PS50887">
    <property type="entry name" value="GGDEF"/>
    <property type="match status" value="1"/>
</dbReference>
<dbReference type="PROSITE" id="PS50113">
    <property type="entry name" value="PAC"/>
    <property type="match status" value="2"/>
</dbReference>
<dbReference type="PROSITE" id="PS50112">
    <property type="entry name" value="PAS"/>
    <property type="match status" value="2"/>
</dbReference>
<accession>P55552</accession>
<gene>
    <name type="ordered locus">NGR_a02630</name>
    <name type="ORF">y4lL</name>
</gene>
<organism>
    <name type="scientific">Sinorhizobium fredii (strain NBRC 101917 / NGR234)</name>
    <dbReference type="NCBI Taxonomy" id="394"/>
    <lineage>
        <taxon>Bacteria</taxon>
        <taxon>Pseudomonadati</taxon>
        <taxon>Pseudomonadota</taxon>
        <taxon>Alphaproteobacteria</taxon>
        <taxon>Hyphomicrobiales</taxon>
        <taxon>Rhizobiaceae</taxon>
        <taxon>Sinorhizobium/Ensifer group</taxon>
        <taxon>Sinorhizobium</taxon>
    </lineage>
</organism>
<keyword id="KW-0614">Plasmid</keyword>
<keyword id="KW-1185">Reference proteome</keyword>
<keyword id="KW-0677">Repeat</keyword>